<reference key="1">
    <citation type="journal article" date="2007" name="BMC Plant Biol.">
        <title>Complete DNA sequences of the plastid genomes of two parasitic flowering plant species, Cuscuta reflexa and Cuscuta gronovii.</title>
        <authorList>
            <person name="Funk H.T."/>
            <person name="Berg S."/>
            <person name="Krupinska K."/>
            <person name="Maier U.-G."/>
            <person name="Krause K."/>
        </authorList>
    </citation>
    <scope>NUCLEOTIDE SEQUENCE [LARGE SCALE GENOMIC DNA]</scope>
</reference>
<evidence type="ECO:0000255" key="1">
    <source>
        <dbReference type="HAMAP-Rule" id="MF_01342"/>
    </source>
</evidence>
<evidence type="ECO:0000305" key="2"/>
<organism>
    <name type="scientific">Cuscuta reflexa</name>
    <name type="common">Southern Asian dodder</name>
    <dbReference type="NCBI Taxonomy" id="4129"/>
    <lineage>
        <taxon>Eukaryota</taxon>
        <taxon>Viridiplantae</taxon>
        <taxon>Streptophyta</taxon>
        <taxon>Embryophyta</taxon>
        <taxon>Tracheophyta</taxon>
        <taxon>Spermatophyta</taxon>
        <taxon>Magnoliopsida</taxon>
        <taxon>eudicotyledons</taxon>
        <taxon>Gunneridae</taxon>
        <taxon>Pentapetalae</taxon>
        <taxon>asterids</taxon>
        <taxon>lamiids</taxon>
        <taxon>Solanales</taxon>
        <taxon>Convolvulaceae</taxon>
        <taxon>Cuscuteae</taxon>
        <taxon>Cuscuta</taxon>
        <taxon>Cuscuta subgen. Monogynella</taxon>
    </lineage>
</organism>
<name>RK16_CUSRE</name>
<comment type="subunit">
    <text evidence="1">Part of the 50S ribosomal subunit.</text>
</comment>
<comment type="subcellular location">
    <subcellularLocation>
        <location>Plastid</location>
    </subcellularLocation>
</comment>
<comment type="similarity">
    <text evidence="1">Belongs to the universal ribosomal protein uL16 family.</text>
</comment>
<comment type="caution">
    <text evidence="2">Young tissue from this organism is photosynthetic and contains some thylakoids, although the photosynthetic activity does not exceed the light compensation point.</text>
</comment>
<dbReference type="EMBL" id="AM711640">
    <property type="protein sequence ID" value="CAM98428.1"/>
    <property type="molecule type" value="Genomic_DNA"/>
</dbReference>
<dbReference type="RefSeq" id="YP_001430141.1">
    <property type="nucleotide sequence ID" value="NC_009766.1"/>
</dbReference>
<dbReference type="SMR" id="A7M9A0"/>
<dbReference type="GeneID" id="5536680"/>
<dbReference type="GO" id="GO:0005762">
    <property type="term" value="C:mitochondrial large ribosomal subunit"/>
    <property type="evidence" value="ECO:0007669"/>
    <property type="project" value="TreeGrafter"/>
</dbReference>
<dbReference type="GO" id="GO:0009536">
    <property type="term" value="C:plastid"/>
    <property type="evidence" value="ECO:0007669"/>
    <property type="project" value="UniProtKB-SubCell"/>
</dbReference>
<dbReference type="GO" id="GO:0019843">
    <property type="term" value="F:rRNA binding"/>
    <property type="evidence" value="ECO:0007669"/>
    <property type="project" value="InterPro"/>
</dbReference>
<dbReference type="GO" id="GO:0003735">
    <property type="term" value="F:structural constituent of ribosome"/>
    <property type="evidence" value="ECO:0007669"/>
    <property type="project" value="InterPro"/>
</dbReference>
<dbReference type="GO" id="GO:0032543">
    <property type="term" value="P:mitochondrial translation"/>
    <property type="evidence" value="ECO:0007669"/>
    <property type="project" value="TreeGrafter"/>
</dbReference>
<dbReference type="CDD" id="cd01433">
    <property type="entry name" value="Ribosomal_L16_L10e"/>
    <property type="match status" value="1"/>
</dbReference>
<dbReference type="FunFam" id="3.90.1170.10:FF:000001">
    <property type="entry name" value="50S ribosomal protein L16"/>
    <property type="match status" value="1"/>
</dbReference>
<dbReference type="Gene3D" id="3.90.1170.10">
    <property type="entry name" value="Ribosomal protein L10e/L16"/>
    <property type="match status" value="1"/>
</dbReference>
<dbReference type="HAMAP" id="MF_01342">
    <property type="entry name" value="Ribosomal_uL16"/>
    <property type="match status" value="1"/>
</dbReference>
<dbReference type="InterPro" id="IPR047873">
    <property type="entry name" value="Ribosomal_uL16"/>
</dbReference>
<dbReference type="InterPro" id="IPR000114">
    <property type="entry name" value="Ribosomal_uL16_bact-type"/>
</dbReference>
<dbReference type="InterPro" id="IPR020798">
    <property type="entry name" value="Ribosomal_uL16_CS"/>
</dbReference>
<dbReference type="InterPro" id="IPR016180">
    <property type="entry name" value="Ribosomal_uL16_dom"/>
</dbReference>
<dbReference type="InterPro" id="IPR036920">
    <property type="entry name" value="Ribosomal_uL16_sf"/>
</dbReference>
<dbReference type="NCBIfam" id="TIGR01164">
    <property type="entry name" value="rplP_bact"/>
    <property type="match status" value="1"/>
</dbReference>
<dbReference type="PANTHER" id="PTHR12220">
    <property type="entry name" value="50S/60S RIBOSOMAL PROTEIN L16"/>
    <property type="match status" value="1"/>
</dbReference>
<dbReference type="PANTHER" id="PTHR12220:SF13">
    <property type="entry name" value="LARGE RIBOSOMAL SUBUNIT PROTEIN UL16M"/>
    <property type="match status" value="1"/>
</dbReference>
<dbReference type="Pfam" id="PF00252">
    <property type="entry name" value="Ribosomal_L16"/>
    <property type="match status" value="1"/>
</dbReference>
<dbReference type="PRINTS" id="PR00060">
    <property type="entry name" value="RIBOSOMALL16"/>
</dbReference>
<dbReference type="SUPFAM" id="SSF54686">
    <property type="entry name" value="Ribosomal protein L16p/L10e"/>
    <property type="match status" value="1"/>
</dbReference>
<dbReference type="PROSITE" id="PS00701">
    <property type="entry name" value="RIBOSOMAL_L16_2"/>
    <property type="match status" value="1"/>
</dbReference>
<feature type="chain" id="PRO_0000354630" description="Large ribosomal subunit protein uL16c">
    <location>
        <begin position="1"/>
        <end position="137"/>
    </location>
</feature>
<keyword id="KW-0934">Plastid</keyword>
<keyword id="KW-0687">Ribonucleoprotein</keyword>
<keyword id="KW-0689">Ribosomal protein</keyword>
<protein>
    <recommendedName>
        <fullName evidence="1">Large ribosomal subunit protein uL16c</fullName>
    </recommendedName>
    <alternativeName>
        <fullName evidence="2">50S ribosomal protein L16, plastid</fullName>
    </alternativeName>
</protein>
<accession>A7M9A0</accession>
<geneLocation type="plastid"/>
<proteinExistence type="inferred from homology"/>
<gene>
    <name evidence="1" type="primary">rpl16</name>
</gene>
<sequence>MLSPKRTRFRKQHRGKMKGISYRGNHICFGKYALQALEPAWITSRQIEAGRRAMTRKARRGGKFWVRIFPDKPVTVRPAETRMGSGKGCPEYWVAVVKPGRILYEMGGVTKNIARRAFSIAASKMPIRTQFIILEIE</sequence>